<comment type="function">
    <text evidence="1">Cell wall formation.</text>
</comment>
<comment type="catalytic activity">
    <reaction evidence="1">
        <text>UDP-N-acetyl-alpha-D-muramate + L-alanine + ATP = UDP-N-acetyl-alpha-D-muramoyl-L-alanine + ADP + phosphate + H(+)</text>
        <dbReference type="Rhea" id="RHEA:23372"/>
        <dbReference type="ChEBI" id="CHEBI:15378"/>
        <dbReference type="ChEBI" id="CHEBI:30616"/>
        <dbReference type="ChEBI" id="CHEBI:43474"/>
        <dbReference type="ChEBI" id="CHEBI:57972"/>
        <dbReference type="ChEBI" id="CHEBI:70757"/>
        <dbReference type="ChEBI" id="CHEBI:83898"/>
        <dbReference type="ChEBI" id="CHEBI:456216"/>
        <dbReference type="EC" id="6.3.2.8"/>
    </reaction>
</comment>
<comment type="pathway">
    <text evidence="1">Cell wall biogenesis; peptidoglycan biosynthesis.</text>
</comment>
<comment type="subcellular location">
    <subcellularLocation>
        <location evidence="1">Cytoplasm</location>
    </subcellularLocation>
</comment>
<comment type="similarity">
    <text evidence="1">Belongs to the MurCDEF family.</text>
</comment>
<reference key="1">
    <citation type="submission" date="2006-03" db="EMBL/GenBank/DDBJ databases">
        <title>Complete sequence of chromosome of Psychrobacter cryohalolentis K5.</title>
        <authorList>
            <consortium name="US DOE Joint Genome Institute"/>
            <person name="Copeland A."/>
            <person name="Lucas S."/>
            <person name="Lapidus A."/>
            <person name="Barry K."/>
            <person name="Detter J.C."/>
            <person name="Glavina T."/>
            <person name="Hammon N."/>
            <person name="Israni S."/>
            <person name="Dalin E."/>
            <person name="Tice H."/>
            <person name="Pitluck S."/>
            <person name="Brettin T."/>
            <person name="Bruce D."/>
            <person name="Han C."/>
            <person name="Tapia R."/>
            <person name="Sims D.R."/>
            <person name="Gilna P."/>
            <person name="Schmutz J."/>
            <person name="Larimer F."/>
            <person name="Land M."/>
            <person name="Hauser L."/>
            <person name="Kyrpides N."/>
            <person name="Kim E."/>
            <person name="Richardson P."/>
        </authorList>
    </citation>
    <scope>NUCLEOTIDE SEQUENCE [LARGE SCALE GENOMIC DNA]</scope>
    <source>
        <strain>ATCC BAA-1226 / DSM 17306 / VKM B-2378 / K5</strain>
    </source>
</reference>
<feature type="chain" id="PRO_0000242581" description="UDP-N-acetylmuramate--L-alanine ligase">
    <location>
        <begin position="1"/>
        <end position="479"/>
    </location>
</feature>
<feature type="binding site" evidence="1">
    <location>
        <begin position="128"/>
        <end position="134"/>
    </location>
    <ligand>
        <name>ATP</name>
        <dbReference type="ChEBI" id="CHEBI:30616"/>
    </ligand>
</feature>
<evidence type="ECO:0000255" key="1">
    <source>
        <dbReference type="HAMAP-Rule" id="MF_00046"/>
    </source>
</evidence>
<gene>
    <name evidence="1" type="primary">murC</name>
    <name type="ordered locus">Pcryo_2031</name>
</gene>
<protein>
    <recommendedName>
        <fullName evidence="1">UDP-N-acetylmuramate--L-alanine ligase</fullName>
        <ecNumber evidence="1">6.3.2.8</ecNumber>
    </recommendedName>
    <alternativeName>
        <fullName evidence="1">UDP-N-acetylmuramoyl-L-alanine synthetase</fullName>
    </alternativeName>
</protein>
<proteinExistence type="inferred from homology"/>
<name>MURC_PSYCK</name>
<dbReference type="EC" id="6.3.2.8" evidence="1"/>
<dbReference type="EMBL" id="CP000323">
    <property type="protein sequence ID" value="ABE75808.1"/>
    <property type="molecule type" value="Genomic_DNA"/>
</dbReference>
<dbReference type="RefSeq" id="WP_011514348.1">
    <property type="nucleotide sequence ID" value="NC_007969.1"/>
</dbReference>
<dbReference type="SMR" id="Q1Q945"/>
<dbReference type="STRING" id="335284.Pcryo_2031"/>
<dbReference type="KEGG" id="pcr:Pcryo_2031"/>
<dbReference type="eggNOG" id="COG0773">
    <property type="taxonomic scope" value="Bacteria"/>
</dbReference>
<dbReference type="HOGENOM" id="CLU_028104_2_2_6"/>
<dbReference type="UniPathway" id="UPA00219"/>
<dbReference type="Proteomes" id="UP000002425">
    <property type="component" value="Chromosome"/>
</dbReference>
<dbReference type="GO" id="GO:0005737">
    <property type="term" value="C:cytoplasm"/>
    <property type="evidence" value="ECO:0007669"/>
    <property type="project" value="UniProtKB-SubCell"/>
</dbReference>
<dbReference type="GO" id="GO:0005524">
    <property type="term" value="F:ATP binding"/>
    <property type="evidence" value="ECO:0007669"/>
    <property type="project" value="UniProtKB-UniRule"/>
</dbReference>
<dbReference type="GO" id="GO:0008763">
    <property type="term" value="F:UDP-N-acetylmuramate-L-alanine ligase activity"/>
    <property type="evidence" value="ECO:0007669"/>
    <property type="project" value="UniProtKB-UniRule"/>
</dbReference>
<dbReference type="GO" id="GO:0051301">
    <property type="term" value="P:cell division"/>
    <property type="evidence" value="ECO:0007669"/>
    <property type="project" value="UniProtKB-KW"/>
</dbReference>
<dbReference type="GO" id="GO:0071555">
    <property type="term" value="P:cell wall organization"/>
    <property type="evidence" value="ECO:0007669"/>
    <property type="project" value="UniProtKB-KW"/>
</dbReference>
<dbReference type="GO" id="GO:0009252">
    <property type="term" value="P:peptidoglycan biosynthetic process"/>
    <property type="evidence" value="ECO:0007669"/>
    <property type="project" value="UniProtKB-UniRule"/>
</dbReference>
<dbReference type="GO" id="GO:0008360">
    <property type="term" value="P:regulation of cell shape"/>
    <property type="evidence" value="ECO:0007669"/>
    <property type="project" value="UniProtKB-KW"/>
</dbReference>
<dbReference type="FunFam" id="3.40.1190.10:FF:000001">
    <property type="entry name" value="UDP-N-acetylmuramate--L-alanine ligase"/>
    <property type="match status" value="1"/>
</dbReference>
<dbReference type="Gene3D" id="3.90.190.20">
    <property type="entry name" value="Mur ligase, C-terminal domain"/>
    <property type="match status" value="1"/>
</dbReference>
<dbReference type="Gene3D" id="3.40.1190.10">
    <property type="entry name" value="Mur-like, catalytic domain"/>
    <property type="match status" value="1"/>
</dbReference>
<dbReference type="Gene3D" id="3.40.50.720">
    <property type="entry name" value="NAD(P)-binding Rossmann-like Domain"/>
    <property type="match status" value="1"/>
</dbReference>
<dbReference type="HAMAP" id="MF_00046">
    <property type="entry name" value="MurC"/>
    <property type="match status" value="1"/>
</dbReference>
<dbReference type="InterPro" id="IPR036565">
    <property type="entry name" value="Mur-like_cat_sf"/>
</dbReference>
<dbReference type="InterPro" id="IPR004101">
    <property type="entry name" value="Mur_ligase_C"/>
</dbReference>
<dbReference type="InterPro" id="IPR036615">
    <property type="entry name" value="Mur_ligase_C_dom_sf"/>
</dbReference>
<dbReference type="InterPro" id="IPR013221">
    <property type="entry name" value="Mur_ligase_cen"/>
</dbReference>
<dbReference type="InterPro" id="IPR000713">
    <property type="entry name" value="Mur_ligase_N"/>
</dbReference>
<dbReference type="InterPro" id="IPR050061">
    <property type="entry name" value="MurCDEF_pg_biosynth"/>
</dbReference>
<dbReference type="InterPro" id="IPR005758">
    <property type="entry name" value="UDP-N-AcMur_Ala_ligase_MurC"/>
</dbReference>
<dbReference type="NCBIfam" id="TIGR01082">
    <property type="entry name" value="murC"/>
    <property type="match status" value="1"/>
</dbReference>
<dbReference type="PANTHER" id="PTHR43445:SF3">
    <property type="entry name" value="UDP-N-ACETYLMURAMATE--L-ALANINE LIGASE"/>
    <property type="match status" value="1"/>
</dbReference>
<dbReference type="PANTHER" id="PTHR43445">
    <property type="entry name" value="UDP-N-ACETYLMURAMATE--L-ALANINE LIGASE-RELATED"/>
    <property type="match status" value="1"/>
</dbReference>
<dbReference type="Pfam" id="PF01225">
    <property type="entry name" value="Mur_ligase"/>
    <property type="match status" value="1"/>
</dbReference>
<dbReference type="Pfam" id="PF02875">
    <property type="entry name" value="Mur_ligase_C"/>
    <property type="match status" value="1"/>
</dbReference>
<dbReference type="Pfam" id="PF08245">
    <property type="entry name" value="Mur_ligase_M"/>
    <property type="match status" value="1"/>
</dbReference>
<dbReference type="SUPFAM" id="SSF51984">
    <property type="entry name" value="MurCD N-terminal domain"/>
    <property type="match status" value="1"/>
</dbReference>
<dbReference type="SUPFAM" id="SSF53623">
    <property type="entry name" value="MurD-like peptide ligases, catalytic domain"/>
    <property type="match status" value="1"/>
</dbReference>
<dbReference type="SUPFAM" id="SSF53244">
    <property type="entry name" value="MurD-like peptide ligases, peptide-binding domain"/>
    <property type="match status" value="1"/>
</dbReference>
<keyword id="KW-0067">ATP-binding</keyword>
<keyword id="KW-0131">Cell cycle</keyword>
<keyword id="KW-0132">Cell division</keyword>
<keyword id="KW-0133">Cell shape</keyword>
<keyword id="KW-0961">Cell wall biogenesis/degradation</keyword>
<keyword id="KW-0963">Cytoplasm</keyword>
<keyword id="KW-0436">Ligase</keyword>
<keyword id="KW-0547">Nucleotide-binding</keyword>
<keyword id="KW-0573">Peptidoglycan synthesis</keyword>
<sequence length="479" mass="52126">MPTSAKALTKRLIEIPEMRRIQHLHFIGIGGSGMCGIAEVMNNQGYQVSGSDITESLVTKRLAQIGIDIAIGHDSKNIANADVIVVSSAIDRSNPEVKAALEARLPVVRRADMLGELMRYRHGIAIAGAHGKTTTTSLLTTMMAEGNLDPTYVIGGKLNASGKNAALGSSRFLIAEADESDASFLSLHPMAAIVTNIDQDHMETYGNSFDKLKAAYIQFLQNMPFYGLAVVCGDDPELYAMIDDIGRPVLTFGLEPFNDVQAVDLVTEGTKTHFTVLRRDHEPLRLTLNIPGVHNVYNALAAITMATDEGVDDAAITRALQKFEGVGRRFEQHASVEIDDGNVLLIDDYGHHPKEVDATIKAARQSFPERRLVMMFQPHRYSRTRDCFDDFVEVLSSVDELLLLDVYSAGESPIAGADTKALARSIRLRGAVEPTIVDKDNIAPVMQRLLKAGDMLITQGAGNVGQIAIDLAANNLYIK</sequence>
<organism>
    <name type="scientific">Psychrobacter cryohalolentis (strain ATCC BAA-1226 / DSM 17306 / VKM B-2378 / K5)</name>
    <dbReference type="NCBI Taxonomy" id="335284"/>
    <lineage>
        <taxon>Bacteria</taxon>
        <taxon>Pseudomonadati</taxon>
        <taxon>Pseudomonadota</taxon>
        <taxon>Gammaproteobacteria</taxon>
        <taxon>Moraxellales</taxon>
        <taxon>Moraxellaceae</taxon>
        <taxon>Psychrobacter</taxon>
    </lineage>
</organism>
<accession>Q1Q945</accession>